<comment type="function">
    <text evidence="1 2">Shows cytolytic activity on many different cells by forming pore in lipid membranes. In vivo, increases heart rate or kills the animal by cardiac arrest. In addition, it binds to heparin with high affinity, interacts with Kv channel-interacting protein 1 (KCNIP1) in a calcium-independent manner, and binds to integrin alpha-V/beta-3 (ITGAV/ITGB3) with moderate affinity.</text>
</comment>
<comment type="subunit">
    <text evidence="1">Monomer in solution; Homodimer and oligomer in the presence of negatively charged lipids forming a pore with a size ranging between 20 and 30 Angstroms.</text>
</comment>
<comment type="subcellular location">
    <subcellularLocation>
        <location evidence="3">Secreted</location>
    </subcellularLocation>
    <subcellularLocation>
        <location evidence="1">Target cell membrane</location>
    </subcellularLocation>
</comment>
<comment type="tissue specificity">
    <text evidence="4">Expressed by the venom gland.</text>
</comment>
<comment type="toxic dose">
    <text evidence="3">LD(50) is 2.6 mg/kg by subcutaneous injection.</text>
</comment>
<comment type="miscellaneous">
    <text evidence="4">Is classified as a S-type cytotoxin, since a serine residue stands at position 27 (Ser-29 in standard classification).</text>
</comment>
<comment type="similarity">
    <text evidence="4">Belongs to the three-finger toxin family. Short-chain subfamily. Type IA cytotoxin sub-subfamily.</text>
</comment>
<accession>P01457</accession>
<proteinExistence type="evidence at protein level"/>
<protein>
    <recommendedName>
        <fullName>Cytotoxin 5</fullName>
    </recommendedName>
    <alternativeName>
        <fullName>Toxin CM-8</fullName>
    </alternativeName>
</protein>
<evidence type="ECO:0000250" key="1">
    <source>
        <dbReference type="UniProtKB" id="P60301"/>
    </source>
</evidence>
<evidence type="ECO:0000250" key="2">
    <source>
        <dbReference type="UniProtKB" id="P60304"/>
    </source>
</evidence>
<evidence type="ECO:0000269" key="3">
    <source>
    </source>
</evidence>
<evidence type="ECO:0000305" key="4"/>
<organism>
    <name type="scientific">Naja haje haje</name>
    <name type="common">Egyptian cobra</name>
    <dbReference type="NCBI Taxonomy" id="8642"/>
    <lineage>
        <taxon>Eukaryota</taxon>
        <taxon>Metazoa</taxon>
        <taxon>Chordata</taxon>
        <taxon>Craniata</taxon>
        <taxon>Vertebrata</taxon>
        <taxon>Euteleostomi</taxon>
        <taxon>Lepidosauria</taxon>
        <taxon>Squamata</taxon>
        <taxon>Bifurcata</taxon>
        <taxon>Unidentata</taxon>
        <taxon>Episquamata</taxon>
        <taxon>Toxicofera</taxon>
        <taxon>Serpentes</taxon>
        <taxon>Colubroidea</taxon>
        <taxon>Elapidae</taxon>
        <taxon>Elapinae</taxon>
        <taxon>Naja</taxon>
    </lineage>
</organism>
<keyword id="KW-0123">Cardiotoxin</keyword>
<keyword id="KW-0204">Cytolysis</keyword>
<keyword id="KW-0903">Direct protein sequencing</keyword>
<keyword id="KW-1015">Disulfide bond</keyword>
<keyword id="KW-0472">Membrane</keyword>
<keyword id="KW-0964">Secreted</keyword>
<keyword id="KW-1052">Target cell membrane</keyword>
<keyword id="KW-1053">Target membrane</keyword>
<keyword id="KW-0800">Toxin</keyword>
<reference key="1">
    <citation type="journal article" date="1978" name="Biochim. Biophys. Acta">
        <title>Naja haje (Egyptian cobra) venom. Purification, some properties and the amino acid sequences of four toxins (CM-7, CM-8, CM-9, and CM-10b).</title>
        <authorList>
            <person name="Joubert F.J."/>
            <person name="Taljaard N."/>
        </authorList>
    </citation>
    <scope>PROTEIN SEQUENCE</scope>
    <scope>SUBCELLULAR LOCATION</scope>
    <scope>TOXIC DOSE</scope>
    <source>
        <tissue>Venom</tissue>
    </source>
</reference>
<feature type="chain" id="PRO_0000093496" description="Cytotoxin 5" evidence="3">
    <location>
        <begin position="1"/>
        <end position="60"/>
    </location>
</feature>
<feature type="disulfide bond" evidence="1">
    <location>
        <begin position="3"/>
        <end position="21"/>
    </location>
</feature>
<feature type="disulfide bond" evidence="1">
    <location>
        <begin position="14"/>
        <end position="38"/>
    </location>
</feature>
<feature type="disulfide bond" evidence="1">
    <location>
        <begin position="42"/>
        <end position="53"/>
    </location>
</feature>
<feature type="disulfide bond" evidence="1">
    <location>
        <begin position="54"/>
        <end position="59"/>
    </location>
</feature>
<dbReference type="PIR" id="A01721">
    <property type="entry name" value="H3NJ5Y"/>
</dbReference>
<dbReference type="SMR" id="P01457"/>
<dbReference type="GO" id="GO:0005576">
    <property type="term" value="C:extracellular region"/>
    <property type="evidence" value="ECO:0007669"/>
    <property type="project" value="UniProtKB-SubCell"/>
</dbReference>
<dbReference type="GO" id="GO:0016020">
    <property type="term" value="C:membrane"/>
    <property type="evidence" value="ECO:0007669"/>
    <property type="project" value="UniProtKB-KW"/>
</dbReference>
<dbReference type="GO" id="GO:0044218">
    <property type="term" value="C:other organism cell membrane"/>
    <property type="evidence" value="ECO:0007669"/>
    <property type="project" value="UniProtKB-KW"/>
</dbReference>
<dbReference type="GO" id="GO:0090729">
    <property type="term" value="F:toxin activity"/>
    <property type="evidence" value="ECO:0007669"/>
    <property type="project" value="UniProtKB-KW"/>
</dbReference>
<dbReference type="GO" id="GO:0031640">
    <property type="term" value="P:killing of cells of another organism"/>
    <property type="evidence" value="ECO:0007669"/>
    <property type="project" value="UniProtKB-KW"/>
</dbReference>
<dbReference type="CDD" id="cd00206">
    <property type="entry name" value="TFP_snake_toxin"/>
    <property type="match status" value="1"/>
</dbReference>
<dbReference type="FunFam" id="2.10.60.10:FF:000024">
    <property type="entry name" value="Cytotoxin 1"/>
    <property type="match status" value="1"/>
</dbReference>
<dbReference type="Gene3D" id="2.10.60.10">
    <property type="entry name" value="CD59"/>
    <property type="match status" value="1"/>
</dbReference>
<dbReference type="InterPro" id="IPR003572">
    <property type="entry name" value="Cytotoxin_Cobra"/>
</dbReference>
<dbReference type="InterPro" id="IPR003571">
    <property type="entry name" value="Snake_3FTx"/>
</dbReference>
<dbReference type="InterPro" id="IPR045860">
    <property type="entry name" value="Snake_toxin-like_sf"/>
</dbReference>
<dbReference type="InterPro" id="IPR018354">
    <property type="entry name" value="Snake_toxin_con_site"/>
</dbReference>
<dbReference type="InterPro" id="IPR054131">
    <property type="entry name" value="Toxin_cobra-type"/>
</dbReference>
<dbReference type="Pfam" id="PF21947">
    <property type="entry name" value="Toxin_cobra-type"/>
    <property type="match status" value="1"/>
</dbReference>
<dbReference type="PRINTS" id="PR00282">
    <property type="entry name" value="CYTOTOXIN"/>
</dbReference>
<dbReference type="SUPFAM" id="SSF57302">
    <property type="entry name" value="Snake toxin-like"/>
    <property type="match status" value="1"/>
</dbReference>
<dbReference type="PROSITE" id="PS00272">
    <property type="entry name" value="SNAKE_TOXIN"/>
    <property type="match status" value="1"/>
</dbReference>
<sequence>LKCHQLVPPFWKTCPEGKNLCYKMYMVSSSTVPVKRGCIDVCPKNSALVKYVCCNTDKCN</sequence>
<name>3SA5_NAJHH</name>